<feature type="chain" id="PRO_1000131612" description="Uronate isomerase">
    <location>
        <begin position="1"/>
        <end position="468"/>
    </location>
</feature>
<keyword id="KW-0413">Isomerase</keyword>
<accession>B1GZ68</accession>
<organism>
    <name type="scientific">Endomicrobium trichonymphae</name>
    <dbReference type="NCBI Taxonomy" id="1408204"/>
    <lineage>
        <taxon>Bacteria</taxon>
        <taxon>Pseudomonadati</taxon>
        <taxon>Elusimicrobiota</taxon>
        <taxon>Endomicrobiia</taxon>
        <taxon>Endomicrobiales</taxon>
        <taxon>Endomicrobiaceae</taxon>
        <taxon>Candidatus Endomicrobiellum</taxon>
    </lineage>
</organism>
<proteinExistence type="inferred from homology"/>
<dbReference type="EC" id="5.3.1.12" evidence="1"/>
<dbReference type="EMBL" id="AP009510">
    <property type="protein sequence ID" value="BAG13550.1"/>
    <property type="molecule type" value="Genomic_DNA"/>
</dbReference>
<dbReference type="RefSeq" id="WP_015423079.1">
    <property type="nucleotide sequence ID" value="NC_020419.1"/>
</dbReference>
<dbReference type="SMR" id="B1GZ68"/>
<dbReference type="STRING" id="471821.TGRD_067"/>
<dbReference type="KEGG" id="rsd:TGRD_067"/>
<dbReference type="PATRIC" id="fig|471821.5.peg.108"/>
<dbReference type="HOGENOM" id="CLU_044465_1_0_0"/>
<dbReference type="UniPathway" id="UPA00246"/>
<dbReference type="Proteomes" id="UP000001691">
    <property type="component" value="Chromosome"/>
</dbReference>
<dbReference type="GO" id="GO:0008880">
    <property type="term" value="F:glucuronate isomerase activity"/>
    <property type="evidence" value="ECO:0007669"/>
    <property type="project" value="UniProtKB-UniRule"/>
</dbReference>
<dbReference type="GO" id="GO:0019698">
    <property type="term" value="P:D-galacturonate catabolic process"/>
    <property type="evidence" value="ECO:0007669"/>
    <property type="project" value="TreeGrafter"/>
</dbReference>
<dbReference type="GO" id="GO:0042840">
    <property type="term" value="P:D-glucuronate catabolic process"/>
    <property type="evidence" value="ECO:0007669"/>
    <property type="project" value="TreeGrafter"/>
</dbReference>
<dbReference type="Gene3D" id="3.20.20.140">
    <property type="entry name" value="Metal-dependent hydrolases"/>
    <property type="match status" value="1"/>
</dbReference>
<dbReference type="Gene3D" id="1.10.2020.10">
    <property type="entry name" value="uronate isomerase, domain 2, chain A"/>
    <property type="match status" value="1"/>
</dbReference>
<dbReference type="HAMAP" id="MF_00675">
    <property type="entry name" value="UxaC"/>
    <property type="match status" value="1"/>
</dbReference>
<dbReference type="InterPro" id="IPR032466">
    <property type="entry name" value="Metal_Hydrolase"/>
</dbReference>
<dbReference type="InterPro" id="IPR003766">
    <property type="entry name" value="Uronate_isomerase"/>
</dbReference>
<dbReference type="NCBIfam" id="NF002794">
    <property type="entry name" value="PRK02925.1"/>
    <property type="match status" value="1"/>
</dbReference>
<dbReference type="PANTHER" id="PTHR30068">
    <property type="entry name" value="URONATE ISOMERASE"/>
    <property type="match status" value="1"/>
</dbReference>
<dbReference type="PANTHER" id="PTHR30068:SF4">
    <property type="entry name" value="URONATE ISOMERASE"/>
    <property type="match status" value="1"/>
</dbReference>
<dbReference type="Pfam" id="PF02614">
    <property type="entry name" value="UxaC"/>
    <property type="match status" value="1"/>
</dbReference>
<dbReference type="SUPFAM" id="SSF51556">
    <property type="entry name" value="Metallo-dependent hydrolases"/>
    <property type="match status" value="1"/>
</dbReference>
<protein>
    <recommendedName>
        <fullName evidence="1">Uronate isomerase</fullName>
        <ecNumber evidence="1">5.3.1.12</ecNumber>
    </recommendedName>
    <alternativeName>
        <fullName evidence="1">Glucuronate isomerase</fullName>
    </alternativeName>
    <alternativeName>
        <fullName evidence="1">Uronic isomerase</fullName>
    </alternativeName>
</protein>
<sequence>MKKFLDKDFLLSTEAAKELFHKYAEKKPILDYHCHINPEEIAKDRQFENISQLWLGSDHYKWRQMRSCGVEEKYITGNASDSEKFQKWAETLEKAIGNPLYHWSHLELRRYFGYEGVLNGETAKEVWTICNEKLREKSMSARSMIKQSSVTLICTTDDPVDNLEWHKKIKEEESFDVQVLPTWRPDRALNIEKPGFKDYIARFSEVSGVNITSFKTMKEAFRKRLGFFISSGCRTTDHAPEYIMYVPSSDKEVETIFDKRLSGVALSKEEELKYKTAFMLFAGGEYSKNDLVMELHYGCKRNNNTLVFDKLGPDTGHDCIDNFAPGAQLSNFLDALDSAGQLPRTIIYSLNPNDNAVIGTILGCFQDSSALSKIQQGAAWWFNDHKPGITEQLTSLANLGILSNFVGMLTDSRSFLSYTRHEYFRRILCDLIGSWVENGEYPYDVKILSKIVSDISYDNAVRYFKFKL</sequence>
<name>UXAC_ENDTX</name>
<evidence type="ECO:0000255" key="1">
    <source>
        <dbReference type="HAMAP-Rule" id="MF_00675"/>
    </source>
</evidence>
<gene>
    <name evidence="1" type="primary">uxaC</name>
    <name type="ordered locus">TGRD_067</name>
</gene>
<reference key="1">
    <citation type="journal article" date="2008" name="Proc. Natl. Acad. Sci. U.S.A.">
        <title>Complete genome of the uncultured termite group 1 bacteria in a single host protist cell.</title>
        <authorList>
            <person name="Hongoh Y."/>
            <person name="Sharma V.K."/>
            <person name="Prakash T."/>
            <person name="Noda S."/>
            <person name="Taylor T.D."/>
            <person name="Kudo T."/>
            <person name="Sakaki Y."/>
            <person name="Toyoda A."/>
            <person name="Hattori M."/>
            <person name="Ohkuma M."/>
        </authorList>
    </citation>
    <scope>NUCLEOTIDE SEQUENCE [LARGE SCALE GENOMIC DNA]</scope>
</reference>
<comment type="catalytic activity">
    <reaction evidence="1">
        <text>D-glucuronate = D-fructuronate</text>
        <dbReference type="Rhea" id="RHEA:13049"/>
        <dbReference type="ChEBI" id="CHEBI:58720"/>
        <dbReference type="ChEBI" id="CHEBI:59863"/>
        <dbReference type="EC" id="5.3.1.12"/>
    </reaction>
</comment>
<comment type="catalytic activity">
    <reaction evidence="1">
        <text>aldehydo-D-galacturonate = keto-D-tagaturonate</text>
        <dbReference type="Rhea" id="RHEA:27702"/>
        <dbReference type="ChEBI" id="CHEBI:12952"/>
        <dbReference type="ChEBI" id="CHEBI:17886"/>
        <dbReference type="EC" id="5.3.1.12"/>
    </reaction>
</comment>
<comment type="pathway">
    <text evidence="1">Carbohydrate metabolism; pentose and glucuronate interconversion.</text>
</comment>
<comment type="similarity">
    <text evidence="1">Belongs to the metallo-dependent hydrolases superfamily. Uronate isomerase family.</text>
</comment>